<gene>
    <name evidence="1" type="primary">frr</name>
    <name type="ordered locus">XOO1863</name>
</gene>
<feature type="chain" id="PRO_1000003312" description="Ribosome-recycling factor">
    <location>
        <begin position="1"/>
        <end position="185"/>
    </location>
</feature>
<protein>
    <recommendedName>
        <fullName evidence="1">Ribosome-recycling factor</fullName>
        <shortName evidence="1">RRF</shortName>
    </recommendedName>
    <alternativeName>
        <fullName evidence="1">Ribosome-releasing factor</fullName>
    </alternativeName>
</protein>
<name>RRF_XANOM</name>
<reference key="1">
    <citation type="journal article" date="2005" name="Jpn. Agric. Res. Q.">
        <title>Genome sequence of Xanthomonas oryzae pv. oryzae suggests contribution of large numbers of effector genes and insertion sequences to its race diversity.</title>
        <authorList>
            <person name="Ochiai H."/>
            <person name="Inoue Y."/>
            <person name="Takeya M."/>
            <person name="Sasaki A."/>
            <person name="Kaku H."/>
        </authorList>
    </citation>
    <scope>NUCLEOTIDE SEQUENCE [LARGE SCALE GENOMIC DNA]</scope>
    <source>
        <strain>MAFF 311018</strain>
    </source>
</reference>
<sequence length="185" mass="20352">MLTQIKQDAQTRMTKSIDALRHSLTTVRTGRASPALLDGIKVKAYGTDTPLNQVASISVSEGRSLVISLFDKGMIKDVEKAIYASDLGLTPTVVGTVIRLNLPPLTEERRKELSKSVHGEGEDSKVAIRNIRRDANQQVKDLLKDKAVTEDEARGAEDDIQKLTDKAIKDVDEVVKAKEQELMTV</sequence>
<accession>Q2P4A9</accession>
<comment type="function">
    <text evidence="1">Responsible for the release of ribosomes from messenger RNA at the termination of protein biosynthesis. May increase the efficiency of translation by recycling ribosomes from one round of translation to another.</text>
</comment>
<comment type="subcellular location">
    <subcellularLocation>
        <location evidence="1">Cytoplasm</location>
    </subcellularLocation>
</comment>
<comment type="similarity">
    <text evidence="1">Belongs to the RRF family.</text>
</comment>
<keyword id="KW-0963">Cytoplasm</keyword>
<keyword id="KW-0648">Protein biosynthesis</keyword>
<dbReference type="EMBL" id="AP008229">
    <property type="protein sequence ID" value="BAE68618.1"/>
    <property type="molecule type" value="Genomic_DNA"/>
</dbReference>
<dbReference type="RefSeq" id="WP_011258697.1">
    <property type="nucleotide sequence ID" value="NC_007705.1"/>
</dbReference>
<dbReference type="SMR" id="Q2P4A9"/>
<dbReference type="GeneID" id="77336855"/>
<dbReference type="KEGG" id="xom:XOO1863"/>
<dbReference type="HOGENOM" id="CLU_073981_2_0_6"/>
<dbReference type="GO" id="GO:0005829">
    <property type="term" value="C:cytosol"/>
    <property type="evidence" value="ECO:0007669"/>
    <property type="project" value="GOC"/>
</dbReference>
<dbReference type="GO" id="GO:0043023">
    <property type="term" value="F:ribosomal large subunit binding"/>
    <property type="evidence" value="ECO:0007669"/>
    <property type="project" value="TreeGrafter"/>
</dbReference>
<dbReference type="GO" id="GO:0002184">
    <property type="term" value="P:cytoplasmic translational termination"/>
    <property type="evidence" value="ECO:0007669"/>
    <property type="project" value="TreeGrafter"/>
</dbReference>
<dbReference type="CDD" id="cd00520">
    <property type="entry name" value="RRF"/>
    <property type="match status" value="1"/>
</dbReference>
<dbReference type="FunFam" id="1.10.132.20:FF:000001">
    <property type="entry name" value="Ribosome-recycling factor"/>
    <property type="match status" value="1"/>
</dbReference>
<dbReference type="FunFam" id="3.30.1360.40:FF:000001">
    <property type="entry name" value="Ribosome-recycling factor"/>
    <property type="match status" value="1"/>
</dbReference>
<dbReference type="Gene3D" id="3.30.1360.40">
    <property type="match status" value="1"/>
</dbReference>
<dbReference type="Gene3D" id="1.10.132.20">
    <property type="entry name" value="Ribosome-recycling factor"/>
    <property type="match status" value="1"/>
</dbReference>
<dbReference type="HAMAP" id="MF_00040">
    <property type="entry name" value="RRF"/>
    <property type="match status" value="1"/>
</dbReference>
<dbReference type="InterPro" id="IPR002661">
    <property type="entry name" value="Ribosome_recyc_fac"/>
</dbReference>
<dbReference type="InterPro" id="IPR023584">
    <property type="entry name" value="Ribosome_recyc_fac_dom"/>
</dbReference>
<dbReference type="InterPro" id="IPR036191">
    <property type="entry name" value="RRF_sf"/>
</dbReference>
<dbReference type="NCBIfam" id="TIGR00496">
    <property type="entry name" value="frr"/>
    <property type="match status" value="1"/>
</dbReference>
<dbReference type="PANTHER" id="PTHR20982:SF3">
    <property type="entry name" value="MITOCHONDRIAL RIBOSOME RECYCLING FACTOR PSEUDO 1"/>
    <property type="match status" value="1"/>
</dbReference>
<dbReference type="PANTHER" id="PTHR20982">
    <property type="entry name" value="RIBOSOME RECYCLING FACTOR"/>
    <property type="match status" value="1"/>
</dbReference>
<dbReference type="Pfam" id="PF01765">
    <property type="entry name" value="RRF"/>
    <property type="match status" value="1"/>
</dbReference>
<dbReference type="SUPFAM" id="SSF55194">
    <property type="entry name" value="Ribosome recycling factor, RRF"/>
    <property type="match status" value="1"/>
</dbReference>
<organism>
    <name type="scientific">Xanthomonas oryzae pv. oryzae (strain MAFF 311018)</name>
    <dbReference type="NCBI Taxonomy" id="342109"/>
    <lineage>
        <taxon>Bacteria</taxon>
        <taxon>Pseudomonadati</taxon>
        <taxon>Pseudomonadota</taxon>
        <taxon>Gammaproteobacteria</taxon>
        <taxon>Lysobacterales</taxon>
        <taxon>Lysobacteraceae</taxon>
        <taxon>Xanthomonas</taxon>
    </lineage>
</organism>
<proteinExistence type="inferred from homology"/>
<evidence type="ECO:0000255" key="1">
    <source>
        <dbReference type="HAMAP-Rule" id="MF_00040"/>
    </source>
</evidence>